<reference key="1">
    <citation type="submission" date="2007-05" db="EMBL/GenBank/DDBJ databases">
        <title>Complete sequence of chromosome of Staphylococcus aureus subsp. aureus JH9.</title>
        <authorList>
            <consortium name="US DOE Joint Genome Institute"/>
            <person name="Copeland A."/>
            <person name="Lucas S."/>
            <person name="Lapidus A."/>
            <person name="Barry K."/>
            <person name="Detter J.C."/>
            <person name="Glavina del Rio T."/>
            <person name="Hammon N."/>
            <person name="Israni S."/>
            <person name="Pitluck S."/>
            <person name="Chain P."/>
            <person name="Malfatti S."/>
            <person name="Shin M."/>
            <person name="Vergez L."/>
            <person name="Schmutz J."/>
            <person name="Larimer F."/>
            <person name="Land M."/>
            <person name="Hauser L."/>
            <person name="Kyrpides N."/>
            <person name="Kim E."/>
            <person name="Tomasz A."/>
            <person name="Richardson P."/>
        </authorList>
    </citation>
    <scope>NUCLEOTIDE SEQUENCE [LARGE SCALE GENOMIC DNA]</scope>
    <source>
        <strain>JH9</strain>
    </source>
</reference>
<comment type="function">
    <text evidence="1">Tetrapolymerization of the monopyrrole PBG into the hydroxymethylbilane pre-uroporphyrinogen in several discrete steps.</text>
</comment>
<comment type="catalytic activity">
    <reaction evidence="1">
        <text>4 porphobilinogen + H2O = hydroxymethylbilane + 4 NH4(+)</text>
        <dbReference type="Rhea" id="RHEA:13185"/>
        <dbReference type="ChEBI" id="CHEBI:15377"/>
        <dbReference type="ChEBI" id="CHEBI:28938"/>
        <dbReference type="ChEBI" id="CHEBI:57845"/>
        <dbReference type="ChEBI" id="CHEBI:58126"/>
        <dbReference type="EC" id="2.5.1.61"/>
    </reaction>
</comment>
<comment type="cofactor">
    <cofactor evidence="1">
        <name>dipyrromethane</name>
        <dbReference type="ChEBI" id="CHEBI:60342"/>
    </cofactor>
    <text evidence="1">Binds 1 dipyrromethane group covalently.</text>
</comment>
<comment type="pathway">
    <text evidence="1">Porphyrin-containing compound metabolism; protoporphyrin-IX biosynthesis; coproporphyrinogen-III from 5-aminolevulinate: step 2/4.</text>
</comment>
<comment type="subunit">
    <text evidence="1">Monomer.</text>
</comment>
<comment type="miscellaneous">
    <text evidence="1">The porphobilinogen subunits are added to the dipyrromethane group.</text>
</comment>
<comment type="similarity">
    <text evidence="1">Belongs to the HMBS family.</text>
</comment>
<proteinExistence type="inferred from homology"/>
<gene>
    <name evidence="1" type="primary">hemC</name>
    <name type="ordered locus">SaurJH9_1728</name>
</gene>
<dbReference type="EC" id="2.5.1.61" evidence="1"/>
<dbReference type="EMBL" id="CP000703">
    <property type="protein sequence ID" value="ABQ49518.1"/>
    <property type="molecule type" value="Genomic_DNA"/>
</dbReference>
<dbReference type="RefSeq" id="WP_001230232.1">
    <property type="nucleotide sequence ID" value="NC_009487.1"/>
</dbReference>
<dbReference type="SMR" id="A5ITJ5"/>
<dbReference type="KEGG" id="saj:SaurJH9_1728"/>
<dbReference type="HOGENOM" id="CLU_019704_0_2_9"/>
<dbReference type="UniPathway" id="UPA00251">
    <property type="reaction ID" value="UER00319"/>
</dbReference>
<dbReference type="GO" id="GO:0005737">
    <property type="term" value="C:cytoplasm"/>
    <property type="evidence" value="ECO:0007669"/>
    <property type="project" value="TreeGrafter"/>
</dbReference>
<dbReference type="GO" id="GO:0004418">
    <property type="term" value="F:hydroxymethylbilane synthase activity"/>
    <property type="evidence" value="ECO:0007669"/>
    <property type="project" value="UniProtKB-UniRule"/>
</dbReference>
<dbReference type="GO" id="GO:0006782">
    <property type="term" value="P:protoporphyrinogen IX biosynthetic process"/>
    <property type="evidence" value="ECO:0007669"/>
    <property type="project" value="UniProtKB-UniRule"/>
</dbReference>
<dbReference type="CDD" id="cd13646">
    <property type="entry name" value="PBP2_EcHMBS_like"/>
    <property type="match status" value="1"/>
</dbReference>
<dbReference type="FunFam" id="3.30.160.40:FF:000001">
    <property type="entry name" value="Porphobilinogen deaminase"/>
    <property type="match status" value="1"/>
</dbReference>
<dbReference type="FunFam" id="3.40.190.10:FF:000004">
    <property type="entry name" value="Porphobilinogen deaminase"/>
    <property type="match status" value="1"/>
</dbReference>
<dbReference type="FunFam" id="3.40.190.10:FF:000005">
    <property type="entry name" value="Porphobilinogen deaminase"/>
    <property type="match status" value="1"/>
</dbReference>
<dbReference type="Gene3D" id="3.40.190.10">
    <property type="entry name" value="Periplasmic binding protein-like II"/>
    <property type="match status" value="2"/>
</dbReference>
<dbReference type="Gene3D" id="3.30.160.40">
    <property type="entry name" value="Porphobilinogen deaminase, C-terminal domain"/>
    <property type="match status" value="1"/>
</dbReference>
<dbReference type="HAMAP" id="MF_00260">
    <property type="entry name" value="Porphobil_deam"/>
    <property type="match status" value="1"/>
</dbReference>
<dbReference type="InterPro" id="IPR000860">
    <property type="entry name" value="HemC"/>
</dbReference>
<dbReference type="InterPro" id="IPR022419">
    <property type="entry name" value="Porphobilin_deaminase_cofac_BS"/>
</dbReference>
<dbReference type="InterPro" id="IPR022417">
    <property type="entry name" value="Porphobilin_deaminase_N"/>
</dbReference>
<dbReference type="InterPro" id="IPR022418">
    <property type="entry name" value="Porphobilinogen_deaminase_C"/>
</dbReference>
<dbReference type="InterPro" id="IPR036803">
    <property type="entry name" value="Porphobilinogen_deaminase_C_sf"/>
</dbReference>
<dbReference type="NCBIfam" id="TIGR00212">
    <property type="entry name" value="hemC"/>
    <property type="match status" value="1"/>
</dbReference>
<dbReference type="PANTHER" id="PTHR11557">
    <property type="entry name" value="PORPHOBILINOGEN DEAMINASE"/>
    <property type="match status" value="1"/>
</dbReference>
<dbReference type="PANTHER" id="PTHR11557:SF0">
    <property type="entry name" value="PORPHOBILINOGEN DEAMINASE"/>
    <property type="match status" value="1"/>
</dbReference>
<dbReference type="Pfam" id="PF01379">
    <property type="entry name" value="Porphobil_deam"/>
    <property type="match status" value="1"/>
</dbReference>
<dbReference type="Pfam" id="PF03900">
    <property type="entry name" value="Porphobil_deamC"/>
    <property type="match status" value="1"/>
</dbReference>
<dbReference type="PIRSF" id="PIRSF001438">
    <property type="entry name" value="4pyrrol_synth_OHMeBilane_synth"/>
    <property type="match status" value="1"/>
</dbReference>
<dbReference type="PRINTS" id="PR00151">
    <property type="entry name" value="PORPHBDMNASE"/>
</dbReference>
<dbReference type="SUPFAM" id="SSF53850">
    <property type="entry name" value="Periplasmic binding protein-like II"/>
    <property type="match status" value="1"/>
</dbReference>
<dbReference type="SUPFAM" id="SSF54782">
    <property type="entry name" value="Porphobilinogen deaminase (hydroxymethylbilane synthase), C-terminal domain"/>
    <property type="match status" value="1"/>
</dbReference>
<dbReference type="PROSITE" id="PS00533">
    <property type="entry name" value="PORPHOBILINOGEN_DEAM"/>
    <property type="match status" value="1"/>
</dbReference>
<keyword id="KW-0627">Porphyrin biosynthesis</keyword>
<keyword id="KW-0808">Transferase</keyword>
<feature type="chain" id="PRO_1000078627" description="Porphobilinogen deaminase">
    <location>
        <begin position="1"/>
        <end position="308"/>
    </location>
</feature>
<feature type="modified residue" description="S-(dipyrrolylmethanemethyl)cysteine" evidence="1">
    <location>
        <position position="241"/>
    </location>
</feature>
<protein>
    <recommendedName>
        <fullName evidence="1">Porphobilinogen deaminase</fullName>
        <shortName evidence="1">PBG</shortName>
        <ecNumber evidence="1">2.5.1.61</ecNumber>
    </recommendedName>
    <alternativeName>
        <fullName evidence="1">Hydroxymethylbilane synthase</fullName>
        <shortName evidence="1">HMBS</shortName>
    </alternativeName>
    <alternativeName>
        <fullName evidence="1">Pre-uroporphyrinogen synthase</fullName>
    </alternativeName>
</protein>
<name>HEM3_STAA9</name>
<accession>A5ITJ5</accession>
<sequence length="308" mass="34367">MRKLVVGSRRSKLALTQSQQFINKLKAVEPNLEIEIKEIVTKGDRIVDKQLSKVGGKGLFVKEIQHELFEKNIDMAIHSLKDVPSVIPEGLTLGCIPDRELPFDAYISKTHTPLSQLPEGSIIGTSSLRRGAQILSKYPNLEIKWIRGNIDTRLEKLQTEDYDAIILAAAGLRRMGWSDDIVTSYLDRDTLLPAIGQGALGIECRSDDEELLTLLSKVHNDEVAKCVTAERTFLAEMDGSCQVPIAGYATISDQKEIEFTGLIMTPDGKERFEYTMNGTDPVELGKTVSNKLKEQGAYEIIKRLNEQH</sequence>
<organism>
    <name type="scientific">Staphylococcus aureus (strain JH9)</name>
    <dbReference type="NCBI Taxonomy" id="359786"/>
    <lineage>
        <taxon>Bacteria</taxon>
        <taxon>Bacillati</taxon>
        <taxon>Bacillota</taxon>
        <taxon>Bacilli</taxon>
        <taxon>Bacillales</taxon>
        <taxon>Staphylococcaceae</taxon>
        <taxon>Staphylococcus</taxon>
    </lineage>
</organism>
<evidence type="ECO:0000255" key="1">
    <source>
        <dbReference type="HAMAP-Rule" id="MF_00260"/>
    </source>
</evidence>